<dbReference type="EMBL" id="GL988041">
    <property type="status" value="NOT_ANNOTATED_CDS"/>
    <property type="molecule type" value="Genomic_DNA"/>
</dbReference>
<dbReference type="PDB" id="8PEL">
    <property type="method" value="X-ray"/>
    <property type="resolution" value="3.81 A"/>
    <property type="chains" value="F=1-284"/>
</dbReference>
<dbReference type="PDB" id="8R1O">
    <property type="method" value="EM"/>
    <property type="resolution" value="3.19 A"/>
    <property type="chains" value="F=1-284"/>
</dbReference>
<dbReference type="PDBsum" id="8PEL"/>
<dbReference type="PDBsum" id="8R1O"/>
<dbReference type="EMDB" id="EMD-18825"/>
<dbReference type="SMR" id="P0CT46"/>
<dbReference type="STRING" id="759272.P0CT46"/>
<dbReference type="Proteomes" id="UP000008066">
    <property type="component" value="Unassembled WGS sequence"/>
</dbReference>
<dbReference type="GO" id="GO:0000177">
    <property type="term" value="C:cytoplasmic exosome (RNase complex)"/>
    <property type="evidence" value="ECO:0007669"/>
    <property type="project" value="TreeGrafter"/>
</dbReference>
<dbReference type="GO" id="GO:0000176">
    <property type="term" value="C:nuclear exosome (RNase complex)"/>
    <property type="evidence" value="ECO:0007669"/>
    <property type="project" value="UniProtKB-ARBA"/>
</dbReference>
<dbReference type="GO" id="GO:0005730">
    <property type="term" value="C:nucleolus"/>
    <property type="evidence" value="ECO:0007669"/>
    <property type="project" value="UniProtKB-SubCell"/>
</dbReference>
<dbReference type="GO" id="GO:0003723">
    <property type="term" value="F:RNA binding"/>
    <property type="evidence" value="ECO:0007669"/>
    <property type="project" value="UniProtKB-KW"/>
</dbReference>
<dbReference type="GO" id="GO:0071028">
    <property type="term" value="P:nuclear mRNA surveillance"/>
    <property type="evidence" value="ECO:0007669"/>
    <property type="project" value="TreeGrafter"/>
</dbReference>
<dbReference type="GO" id="GO:0071051">
    <property type="term" value="P:poly(A)-dependent snoRNA 3'-end processing"/>
    <property type="evidence" value="ECO:0007669"/>
    <property type="project" value="TreeGrafter"/>
</dbReference>
<dbReference type="GO" id="GO:0016075">
    <property type="term" value="P:rRNA catabolic process"/>
    <property type="evidence" value="ECO:0007669"/>
    <property type="project" value="TreeGrafter"/>
</dbReference>
<dbReference type="GO" id="GO:0006364">
    <property type="term" value="P:rRNA processing"/>
    <property type="evidence" value="ECO:0007669"/>
    <property type="project" value="UniProtKB-KW"/>
</dbReference>
<dbReference type="GO" id="GO:0034475">
    <property type="term" value="P:U4 snRNA 3'-end processing"/>
    <property type="evidence" value="ECO:0007669"/>
    <property type="project" value="TreeGrafter"/>
</dbReference>
<dbReference type="CDD" id="cd11371">
    <property type="entry name" value="RNase_PH_MTR3"/>
    <property type="match status" value="1"/>
</dbReference>
<dbReference type="Gene3D" id="3.30.230.70">
    <property type="entry name" value="GHMP Kinase, N-terminal domain"/>
    <property type="match status" value="1"/>
</dbReference>
<dbReference type="InterPro" id="IPR001247">
    <property type="entry name" value="ExoRNase_PH_dom1"/>
</dbReference>
<dbReference type="InterPro" id="IPR036345">
    <property type="entry name" value="ExoRNase_PH_dom2_sf"/>
</dbReference>
<dbReference type="InterPro" id="IPR027408">
    <property type="entry name" value="PNPase/RNase_PH_dom_sf"/>
</dbReference>
<dbReference type="InterPro" id="IPR020568">
    <property type="entry name" value="Ribosomal_Su5_D2-typ_SF"/>
</dbReference>
<dbReference type="InterPro" id="IPR050080">
    <property type="entry name" value="RNase_PH"/>
</dbReference>
<dbReference type="PANTHER" id="PTHR11953">
    <property type="entry name" value="EXOSOME COMPLEX COMPONENT"/>
    <property type="match status" value="1"/>
</dbReference>
<dbReference type="PANTHER" id="PTHR11953:SF2">
    <property type="entry name" value="EXOSOME COMPLEX COMPONENT MTR3"/>
    <property type="match status" value="1"/>
</dbReference>
<dbReference type="Pfam" id="PF01138">
    <property type="entry name" value="RNase_PH"/>
    <property type="match status" value="1"/>
</dbReference>
<dbReference type="SUPFAM" id="SSF55666">
    <property type="entry name" value="Ribonuclease PH domain 2-like"/>
    <property type="match status" value="1"/>
</dbReference>
<dbReference type="SUPFAM" id="SSF54211">
    <property type="entry name" value="Ribosomal protein S5 domain 2-like"/>
    <property type="match status" value="1"/>
</dbReference>
<feature type="chain" id="PRO_0000425284" description="Exosome complex component MTR3">
    <location>
        <begin position="1"/>
        <end position="284"/>
    </location>
</feature>
<gene>
    <name type="primary">MTR3</name>
    <name type="ORF">CTHT_0115690</name>
</gene>
<organism>
    <name type="scientific">Chaetomium thermophilum (strain DSM 1495 / CBS 144.50 / IMI 039719)</name>
    <name type="common">Thermochaetoides thermophila</name>
    <dbReference type="NCBI Taxonomy" id="759272"/>
    <lineage>
        <taxon>Eukaryota</taxon>
        <taxon>Fungi</taxon>
        <taxon>Dikarya</taxon>
        <taxon>Ascomycota</taxon>
        <taxon>Pezizomycotina</taxon>
        <taxon>Sordariomycetes</taxon>
        <taxon>Sordariomycetidae</taxon>
        <taxon>Sordariales</taxon>
        <taxon>Chaetomiaceae</taxon>
        <taxon>Thermochaetoides</taxon>
    </lineage>
</organism>
<accession>P0CT46</accession>
<proteinExistence type="evidence at protein level"/>
<sequence>MTDRRRINGPAGATIPPVYEDSGISEVKALKIRSRPSNIIRKIYLKTGVTPSASGSAYLELETSANSGVSGLKLSCTVHGPRSLPRSSPFSPHMVVSTHVKYAPFATKQRRGYLRDPTERDLGIHLEAALRGAIIADRWPKSGVDIIISIIEGDQDREASKTQGDEVWDMMNTLSGCITVASAALADAGIDCVDTVAGGVAALVQDSDGSPEIVVDPIPSEHRKILAACCVAYLPMRDEVTNLWFRGDLPASDMDLYTELVEKGIQASRSANRVLVDCLTETVG</sequence>
<name>MTR3_CHATD</name>
<comment type="function">
    <text evidence="1">Non-catalytic component of the RNA exosome complex which has 3'-&gt;5' exoribonuclease activity and participates in a multitude of cellular RNA processing and degradation events.</text>
</comment>
<comment type="subunit">
    <text evidence="1">Component of the RNA exosome complex.</text>
</comment>
<comment type="subcellular location">
    <subcellularLocation>
        <location evidence="1">Cytoplasm</location>
    </subcellularLocation>
    <subcellularLocation>
        <location evidence="1">Nucleus</location>
        <location evidence="1">Nucleolus</location>
    </subcellularLocation>
</comment>
<comment type="similarity">
    <text evidence="2">Belongs to the RNase PH family.</text>
</comment>
<evidence type="ECO:0000250" key="1"/>
<evidence type="ECO:0000305" key="2"/>
<reference key="1">
    <citation type="journal article" date="2011" name="Cell">
        <title>Insight into structure and assembly of the nuclear pore complex by utilizing the genome of a eukaryotic thermophile.</title>
        <authorList>
            <person name="Amlacher S."/>
            <person name="Sarges P."/>
            <person name="Flemming D."/>
            <person name="van Noort V."/>
            <person name="Kunze R."/>
            <person name="Devos D.P."/>
            <person name="Arumugam M."/>
            <person name="Bork P."/>
            <person name="Hurt E."/>
        </authorList>
    </citation>
    <scope>NUCLEOTIDE SEQUENCE [LARGE SCALE GENOMIC DNA]</scope>
    <source>
        <strain>DSM 1495 / CBS 144.50 / IMI 039719</strain>
    </source>
</reference>
<protein>
    <recommendedName>
        <fullName>Exosome complex component MTR3</fullName>
    </recommendedName>
    <alternativeName>
        <fullName>mRNA transport regulator 3</fullName>
    </alternativeName>
</protein>
<keyword id="KW-0002">3D-structure</keyword>
<keyword id="KW-0963">Cytoplasm</keyword>
<keyword id="KW-0271">Exosome</keyword>
<keyword id="KW-0539">Nucleus</keyword>
<keyword id="KW-1185">Reference proteome</keyword>
<keyword id="KW-0694">RNA-binding</keyword>
<keyword id="KW-0698">rRNA processing</keyword>